<keyword id="KW-0021">Allosteric enzyme</keyword>
<keyword id="KW-0067">ATP-binding</keyword>
<keyword id="KW-0963">Cytoplasm</keyword>
<keyword id="KW-0324">Glycolysis</keyword>
<keyword id="KW-0418">Kinase</keyword>
<keyword id="KW-0460">Magnesium</keyword>
<keyword id="KW-0479">Metal-binding</keyword>
<keyword id="KW-0547">Nucleotide-binding</keyword>
<keyword id="KW-0808">Transferase</keyword>
<feature type="chain" id="PRO_1000120067" description="ATP-dependent 6-phosphofructokinase">
    <location>
        <begin position="1"/>
        <end position="320"/>
    </location>
</feature>
<feature type="active site" description="Proton acceptor" evidence="1">
    <location>
        <position position="128"/>
    </location>
</feature>
<feature type="binding site" evidence="1">
    <location>
        <position position="12"/>
    </location>
    <ligand>
        <name>ATP</name>
        <dbReference type="ChEBI" id="CHEBI:30616"/>
    </ligand>
</feature>
<feature type="binding site" evidence="1">
    <location>
        <begin position="22"/>
        <end position="26"/>
    </location>
    <ligand>
        <name>ADP</name>
        <dbReference type="ChEBI" id="CHEBI:456216"/>
        <note>allosteric activator; ligand shared between dimeric partners</note>
    </ligand>
</feature>
<feature type="binding site" evidence="1">
    <location>
        <begin position="73"/>
        <end position="74"/>
    </location>
    <ligand>
        <name>ATP</name>
        <dbReference type="ChEBI" id="CHEBI:30616"/>
    </ligand>
</feature>
<feature type="binding site" evidence="1">
    <location>
        <begin position="103"/>
        <end position="106"/>
    </location>
    <ligand>
        <name>ATP</name>
        <dbReference type="ChEBI" id="CHEBI:30616"/>
    </ligand>
</feature>
<feature type="binding site" evidence="1">
    <location>
        <position position="104"/>
    </location>
    <ligand>
        <name>Mg(2+)</name>
        <dbReference type="ChEBI" id="CHEBI:18420"/>
        <note>catalytic</note>
    </ligand>
</feature>
<feature type="binding site" description="in other chain" evidence="1">
    <location>
        <begin position="126"/>
        <end position="128"/>
    </location>
    <ligand>
        <name>substrate</name>
        <note>ligand shared between dimeric partners</note>
    </ligand>
</feature>
<feature type="binding site" description="in other chain" evidence="1">
    <location>
        <position position="155"/>
    </location>
    <ligand>
        <name>ADP</name>
        <dbReference type="ChEBI" id="CHEBI:456216"/>
        <note>allosteric activator; ligand shared between dimeric partners</note>
    </ligand>
</feature>
<feature type="binding site" evidence="1">
    <location>
        <position position="163"/>
    </location>
    <ligand>
        <name>substrate</name>
        <note>ligand shared between dimeric partners</note>
    </ligand>
</feature>
<feature type="binding site" description="in other chain" evidence="1">
    <location>
        <begin position="170"/>
        <end position="172"/>
    </location>
    <ligand>
        <name>substrate</name>
        <note>ligand shared between dimeric partners</note>
    </ligand>
</feature>
<feature type="binding site" description="in other chain" evidence="1">
    <location>
        <begin position="186"/>
        <end position="188"/>
    </location>
    <ligand>
        <name>ADP</name>
        <dbReference type="ChEBI" id="CHEBI:456216"/>
        <note>allosteric activator; ligand shared between dimeric partners</note>
    </ligand>
</feature>
<feature type="binding site" description="in other chain" evidence="1">
    <location>
        <position position="212"/>
    </location>
    <ligand>
        <name>ADP</name>
        <dbReference type="ChEBI" id="CHEBI:456216"/>
        <note>allosteric activator; ligand shared between dimeric partners</note>
    </ligand>
</feature>
<feature type="binding site" description="in other chain" evidence="1">
    <location>
        <begin position="214"/>
        <end position="216"/>
    </location>
    <ligand>
        <name>ADP</name>
        <dbReference type="ChEBI" id="CHEBI:456216"/>
        <note>allosteric activator; ligand shared between dimeric partners</note>
    </ligand>
</feature>
<feature type="binding site" description="in other chain" evidence="1">
    <location>
        <position position="223"/>
    </location>
    <ligand>
        <name>substrate</name>
        <note>ligand shared between dimeric partners</note>
    </ligand>
</feature>
<feature type="binding site" evidence="1">
    <location>
        <position position="244"/>
    </location>
    <ligand>
        <name>substrate</name>
        <note>ligand shared between dimeric partners</note>
    </ligand>
</feature>
<feature type="binding site" description="in other chain" evidence="1">
    <location>
        <begin position="250"/>
        <end position="253"/>
    </location>
    <ligand>
        <name>substrate</name>
        <note>ligand shared between dimeric partners</note>
    </ligand>
</feature>
<protein>
    <recommendedName>
        <fullName evidence="1">ATP-dependent 6-phosphofructokinase</fullName>
        <shortName evidence="1">ATP-PFK</shortName>
        <shortName evidence="1">Phosphofructokinase</shortName>
        <ecNumber evidence="1">2.7.1.11</ecNumber>
    </recommendedName>
    <alternativeName>
        <fullName evidence="1">Phosphohexokinase</fullName>
    </alternativeName>
</protein>
<sequence length="320" mass="34691">MVKKIGVLTSGGDAPGMNAAVRGVVRTALTEGLEVFGIHDGYLGLVEDRIEKLERHSVSDMINRGGTFLGSARFPEFKEVAVREKAIENLKKHDIDALIVIGGDGSYMGAKKLTEMGYPCIGLPGTIDNDIAGTDYTIGYLTALNTVIDAIDRLRDTSSSHQRISIVEVMGRHCGDLTLMSAIAGGCEYVITPETGLNKEALIQNIQDGIAKGKKHAIIAITELMTDVNQLAKEIEAETGRETRATVLGHIQRGGQPGAFDRILASRMGNYGVKLLIDGHGGRCVGIQNEQLVHHDIIDAIENMRRPEKLELYKVAEELF</sequence>
<gene>
    <name evidence="1" type="primary">pfkA</name>
    <name type="ordered locus">VFMJ11_2462</name>
</gene>
<reference key="1">
    <citation type="submission" date="2008-08" db="EMBL/GenBank/DDBJ databases">
        <title>Complete sequence of Vibrio fischeri strain MJ11.</title>
        <authorList>
            <person name="Mandel M.J."/>
            <person name="Stabb E.V."/>
            <person name="Ruby E.G."/>
            <person name="Ferriera S."/>
            <person name="Johnson J."/>
            <person name="Kravitz S."/>
            <person name="Beeson K."/>
            <person name="Sutton G."/>
            <person name="Rogers Y.-H."/>
            <person name="Friedman R."/>
            <person name="Frazier M."/>
            <person name="Venter J.C."/>
        </authorList>
    </citation>
    <scope>NUCLEOTIDE SEQUENCE [LARGE SCALE GENOMIC DNA]</scope>
    <source>
        <strain>MJ11</strain>
    </source>
</reference>
<organism>
    <name type="scientific">Aliivibrio fischeri (strain MJ11)</name>
    <name type="common">Vibrio fischeri</name>
    <dbReference type="NCBI Taxonomy" id="388396"/>
    <lineage>
        <taxon>Bacteria</taxon>
        <taxon>Pseudomonadati</taxon>
        <taxon>Pseudomonadota</taxon>
        <taxon>Gammaproteobacteria</taxon>
        <taxon>Vibrionales</taxon>
        <taxon>Vibrionaceae</taxon>
        <taxon>Aliivibrio</taxon>
    </lineage>
</organism>
<comment type="function">
    <text evidence="1">Catalyzes the phosphorylation of D-fructose 6-phosphate to fructose 1,6-bisphosphate by ATP, the first committing step of glycolysis.</text>
</comment>
<comment type="catalytic activity">
    <reaction evidence="1">
        <text>beta-D-fructose 6-phosphate + ATP = beta-D-fructose 1,6-bisphosphate + ADP + H(+)</text>
        <dbReference type="Rhea" id="RHEA:16109"/>
        <dbReference type="ChEBI" id="CHEBI:15378"/>
        <dbReference type="ChEBI" id="CHEBI:30616"/>
        <dbReference type="ChEBI" id="CHEBI:32966"/>
        <dbReference type="ChEBI" id="CHEBI:57634"/>
        <dbReference type="ChEBI" id="CHEBI:456216"/>
        <dbReference type="EC" id="2.7.1.11"/>
    </reaction>
</comment>
<comment type="cofactor">
    <cofactor evidence="1">
        <name>Mg(2+)</name>
        <dbReference type="ChEBI" id="CHEBI:18420"/>
    </cofactor>
</comment>
<comment type="activity regulation">
    <text evidence="1">Allosterically activated by ADP and other diphosphonucleosides, and allosterically inhibited by phosphoenolpyruvate.</text>
</comment>
<comment type="pathway">
    <text evidence="1">Carbohydrate degradation; glycolysis; D-glyceraldehyde 3-phosphate and glycerone phosphate from D-glucose: step 3/4.</text>
</comment>
<comment type="subunit">
    <text evidence="1">Homotetramer.</text>
</comment>
<comment type="subcellular location">
    <subcellularLocation>
        <location evidence="1">Cytoplasm</location>
    </subcellularLocation>
</comment>
<comment type="similarity">
    <text evidence="1">Belongs to the phosphofructokinase type A (PFKA) family. ATP-dependent PFK group I subfamily. Prokaryotic clade 'B1' sub-subfamily.</text>
</comment>
<name>PFKA_ALIFM</name>
<accession>B5FBT1</accession>
<dbReference type="EC" id="2.7.1.11" evidence="1"/>
<dbReference type="EMBL" id="CP001139">
    <property type="protein sequence ID" value="ACH66040.1"/>
    <property type="molecule type" value="Genomic_DNA"/>
</dbReference>
<dbReference type="RefSeq" id="WP_005421189.1">
    <property type="nucleotide sequence ID" value="NC_011184.1"/>
</dbReference>
<dbReference type="SMR" id="B5FBT1"/>
<dbReference type="GeneID" id="54165063"/>
<dbReference type="KEGG" id="vfm:VFMJ11_2462"/>
<dbReference type="HOGENOM" id="CLU_020655_0_1_6"/>
<dbReference type="UniPathway" id="UPA00109">
    <property type="reaction ID" value="UER00182"/>
</dbReference>
<dbReference type="Proteomes" id="UP000001857">
    <property type="component" value="Chromosome I"/>
</dbReference>
<dbReference type="GO" id="GO:0005945">
    <property type="term" value="C:6-phosphofructokinase complex"/>
    <property type="evidence" value="ECO:0007669"/>
    <property type="project" value="TreeGrafter"/>
</dbReference>
<dbReference type="GO" id="GO:0003872">
    <property type="term" value="F:6-phosphofructokinase activity"/>
    <property type="evidence" value="ECO:0007669"/>
    <property type="project" value="UniProtKB-UniRule"/>
</dbReference>
<dbReference type="GO" id="GO:0016208">
    <property type="term" value="F:AMP binding"/>
    <property type="evidence" value="ECO:0007669"/>
    <property type="project" value="TreeGrafter"/>
</dbReference>
<dbReference type="GO" id="GO:0005524">
    <property type="term" value="F:ATP binding"/>
    <property type="evidence" value="ECO:0007669"/>
    <property type="project" value="UniProtKB-KW"/>
</dbReference>
<dbReference type="GO" id="GO:0070095">
    <property type="term" value="F:fructose-6-phosphate binding"/>
    <property type="evidence" value="ECO:0007669"/>
    <property type="project" value="TreeGrafter"/>
</dbReference>
<dbReference type="GO" id="GO:0042802">
    <property type="term" value="F:identical protein binding"/>
    <property type="evidence" value="ECO:0007669"/>
    <property type="project" value="TreeGrafter"/>
</dbReference>
<dbReference type="GO" id="GO:0046872">
    <property type="term" value="F:metal ion binding"/>
    <property type="evidence" value="ECO:0007669"/>
    <property type="project" value="UniProtKB-KW"/>
</dbReference>
<dbReference type="GO" id="GO:0048029">
    <property type="term" value="F:monosaccharide binding"/>
    <property type="evidence" value="ECO:0007669"/>
    <property type="project" value="TreeGrafter"/>
</dbReference>
<dbReference type="GO" id="GO:0061621">
    <property type="term" value="P:canonical glycolysis"/>
    <property type="evidence" value="ECO:0007669"/>
    <property type="project" value="TreeGrafter"/>
</dbReference>
<dbReference type="GO" id="GO:0030388">
    <property type="term" value="P:fructose 1,6-bisphosphate metabolic process"/>
    <property type="evidence" value="ECO:0007669"/>
    <property type="project" value="TreeGrafter"/>
</dbReference>
<dbReference type="GO" id="GO:0006002">
    <property type="term" value="P:fructose 6-phosphate metabolic process"/>
    <property type="evidence" value="ECO:0007669"/>
    <property type="project" value="InterPro"/>
</dbReference>
<dbReference type="CDD" id="cd00763">
    <property type="entry name" value="Bacterial_PFK"/>
    <property type="match status" value="1"/>
</dbReference>
<dbReference type="FunFam" id="3.40.50.450:FF:000001">
    <property type="entry name" value="ATP-dependent 6-phosphofructokinase"/>
    <property type="match status" value="1"/>
</dbReference>
<dbReference type="FunFam" id="3.40.50.460:FF:000002">
    <property type="entry name" value="ATP-dependent 6-phosphofructokinase"/>
    <property type="match status" value="1"/>
</dbReference>
<dbReference type="Gene3D" id="3.40.50.450">
    <property type="match status" value="1"/>
</dbReference>
<dbReference type="Gene3D" id="3.40.50.460">
    <property type="entry name" value="Phosphofructokinase domain"/>
    <property type="match status" value="1"/>
</dbReference>
<dbReference type="HAMAP" id="MF_00339">
    <property type="entry name" value="Phosphofructokinase_I_B1"/>
    <property type="match status" value="1"/>
</dbReference>
<dbReference type="InterPro" id="IPR022953">
    <property type="entry name" value="ATP_PFK"/>
</dbReference>
<dbReference type="InterPro" id="IPR012003">
    <property type="entry name" value="ATP_PFK_prok-type"/>
</dbReference>
<dbReference type="InterPro" id="IPR012828">
    <property type="entry name" value="PFKA_ATP_prok"/>
</dbReference>
<dbReference type="InterPro" id="IPR015912">
    <property type="entry name" value="Phosphofructokinase_CS"/>
</dbReference>
<dbReference type="InterPro" id="IPR000023">
    <property type="entry name" value="Phosphofructokinase_dom"/>
</dbReference>
<dbReference type="InterPro" id="IPR035966">
    <property type="entry name" value="PKF_sf"/>
</dbReference>
<dbReference type="NCBIfam" id="TIGR02482">
    <property type="entry name" value="PFKA_ATP"/>
    <property type="match status" value="1"/>
</dbReference>
<dbReference type="NCBIfam" id="NF002872">
    <property type="entry name" value="PRK03202.1"/>
    <property type="match status" value="1"/>
</dbReference>
<dbReference type="PANTHER" id="PTHR13697:SF4">
    <property type="entry name" value="ATP-DEPENDENT 6-PHOSPHOFRUCTOKINASE"/>
    <property type="match status" value="1"/>
</dbReference>
<dbReference type="PANTHER" id="PTHR13697">
    <property type="entry name" value="PHOSPHOFRUCTOKINASE"/>
    <property type="match status" value="1"/>
</dbReference>
<dbReference type="Pfam" id="PF00365">
    <property type="entry name" value="PFK"/>
    <property type="match status" value="1"/>
</dbReference>
<dbReference type="PIRSF" id="PIRSF000532">
    <property type="entry name" value="ATP_PFK_prok"/>
    <property type="match status" value="1"/>
</dbReference>
<dbReference type="PRINTS" id="PR00476">
    <property type="entry name" value="PHFRCTKINASE"/>
</dbReference>
<dbReference type="SUPFAM" id="SSF53784">
    <property type="entry name" value="Phosphofructokinase"/>
    <property type="match status" value="1"/>
</dbReference>
<dbReference type="PROSITE" id="PS00433">
    <property type="entry name" value="PHOSPHOFRUCTOKINASE"/>
    <property type="match status" value="1"/>
</dbReference>
<proteinExistence type="inferred from homology"/>
<evidence type="ECO:0000255" key="1">
    <source>
        <dbReference type="HAMAP-Rule" id="MF_00339"/>
    </source>
</evidence>